<accession>P45701</accession>
<comment type="function">
    <text>Involved in the maturation of Asn-linked oligosaccharides. Progressively trim alpha-1,2-linked mannose residues from Man(9)GlcNAc(2) to produce Man(5)GlcNAc(2).</text>
</comment>
<comment type="catalytic activity">
    <reaction evidence="3">
        <text>N(4)-(alpha-D-Man-(1-&gt;2)-alpha-D-Man-(1-&gt;2)-alpha-D-Man-(1-&gt;3)-[alpha-D-Man-(1-&gt;2)-alpha-D-Man-(1-&gt;3)-[alpha-D-Man-(1-&gt;2)-alpha-D-Man-(1-&gt;6)]-alpha-D-Man-(1-&gt;6)]-beta-D-Man-(1-&gt;4)-beta-D-GlcNAc-(1-&gt;4)-beta-D-GlcNAc)-L-asparaginyl-[protein] (N-glucan mannose isomer 9A1,2,3B1,2,3) + 4 H2O = N(4)-(alpha-D-Man-(1-&gt;3)-[alpha-D-Man-(1-&gt;3)-[alpha-D-Man-(1-&gt;6)]-alpha-D-Man-(1-&gt;6)]-beta-D-Man-(1-&gt;4)-beta-D-GlcNAc-(1-&gt;4)-beta-D-GlcNAc)-L-asparaginyl-[protein] (N-glucan mannose isomer 5A1,2) + 4 beta-D-mannose</text>
        <dbReference type="Rhea" id="RHEA:56008"/>
        <dbReference type="Rhea" id="RHEA-COMP:14356"/>
        <dbReference type="Rhea" id="RHEA-COMP:14367"/>
        <dbReference type="ChEBI" id="CHEBI:15377"/>
        <dbReference type="ChEBI" id="CHEBI:28563"/>
        <dbReference type="ChEBI" id="CHEBI:59087"/>
        <dbReference type="ChEBI" id="CHEBI:139493"/>
        <dbReference type="EC" id="3.2.1.113"/>
    </reaction>
</comment>
<comment type="catalytic activity">
    <reaction evidence="3">
        <text>N(4)-(alpha-D-Man-(1-&gt;2)-alpha-D-Man-(1-&gt;2)-alpha-D-Man-(1-&gt;3)-[alpha-D-Man-(1-&gt;3)-[alpha-D-Man-(1-&gt;2)-alpha-D-Man-(1-&gt;6)]-alpha-D-Man-(1-&gt;6)]-beta-D-Man-(1-&gt;4)-beta-D-GlcNAc-(1-&gt;4)-beta-D-GlcNAc)-L-asparaginyl-[protein] (N-glucan mannose isomer 8A1,2,3B1,3) + 3 H2O = N(4)-(alpha-D-Man-(1-&gt;3)-[alpha-D-Man-(1-&gt;3)-[alpha-D-Man-(1-&gt;6)]-alpha-D-Man-(1-&gt;6)]-beta-D-Man-(1-&gt;4)-beta-D-GlcNAc-(1-&gt;4)-beta-D-GlcNAc)-L-asparaginyl-[protein] (N-glucan mannose isomer 5A1,2) + 3 beta-D-mannose</text>
        <dbReference type="Rhea" id="RHEA:56028"/>
        <dbReference type="Rhea" id="RHEA-COMP:14358"/>
        <dbReference type="Rhea" id="RHEA-COMP:14367"/>
        <dbReference type="ChEBI" id="CHEBI:15377"/>
        <dbReference type="ChEBI" id="CHEBI:28563"/>
        <dbReference type="ChEBI" id="CHEBI:59087"/>
        <dbReference type="ChEBI" id="CHEBI:60628"/>
        <dbReference type="EC" id="3.2.1.113"/>
    </reaction>
</comment>
<comment type="cofactor">
    <cofactor evidence="4">
        <name>Ca(2+)</name>
        <dbReference type="ChEBI" id="CHEBI:29108"/>
    </cofactor>
</comment>
<comment type="activity regulation">
    <text evidence="1">Inhibited by both 1-deoxymannojirimycin and kifunensine.</text>
</comment>
<comment type="pathway">
    <text evidence="3">Protein modification; protein glycosylation.</text>
</comment>
<comment type="subcellular location">
    <subcellularLocation>
        <location>Golgi apparatus membrane</location>
        <topology>Single-pass type II membrane protein</topology>
    </subcellularLocation>
</comment>
<comment type="similarity">
    <text evidence="6">Belongs to the glycosyl hydrolase 47 family.</text>
</comment>
<sequence length="469" mass="53427">REPADAAVREKRAKIKEMMEHAWNSYKRYAWGLNELKPITKEGHSSSLFGTIKGATIVDALDTLFIMGMESEFQEAKSWIAENLDFNVNAEISVFEVNIRFVGGLLSAYYLSGEEIFRKKAVELGIKLLPAFHTPSGIPWALLNIKSGIGRNWPWASGGSSILAEFGTLHLEFMHLSHLSGNPIFAEKVMNIRKVLNKLEKPEGLYPNYLNPSSGQWGQHHVSIGGLGDSFYEYLLKAWLMSEKTDLEAKKMYFDAVQAIETHLIRKSSGGLTYIAEWKGGLLEHKMGHLTCFAGGMFALGADGAPEGRAQHYLELGAEIARTCHESYNRTFMKLGPEAFRFDGGVEAIATRQNEKYYILRPEVVETYMYMWRLTHDPKYRKWAWEAVEALESHCRVNGGYSGLRDVYFTHEKYDNVQQSFFLAETLKYLYLIFSDDDLLPLEHWIFNTEAHLLPILPTDQKEVEVKVK</sequence>
<gene>
    <name type="primary">MAN1A1</name>
</gene>
<feature type="chain" id="PRO_0000210311" description="Mannosyl-oligosaccharide 1,2-alpha-mannosidase IA">
    <location>
        <begin position="1" status="less than"/>
        <end position="469"/>
    </location>
</feature>
<feature type="topological domain" description="Lumenal" evidence="5">
    <location>
        <begin position="1" status="less than"/>
        <end position="469"/>
    </location>
</feature>
<feature type="active site" description="Proton donor" evidence="2">
    <location>
        <position position="338"/>
    </location>
</feature>
<feature type="binding site" evidence="3">
    <location>
        <position position="449"/>
    </location>
    <ligand>
        <name>Ca(2+)</name>
        <dbReference type="ChEBI" id="CHEBI:29108"/>
    </ligand>
</feature>
<feature type="glycosylation site" description="N-linked (GlcNAc...) asparagine" evidence="5">
    <location>
        <position position="329"/>
    </location>
</feature>
<feature type="disulfide bond" evidence="3">
    <location>
        <begin position="292"/>
        <end position="324"/>
    </location>
</feature>
<feature type="non-terminal residue">
    <location>
        <position position="1"/>
    </location>
</feature>
<evidence type="ECO:0000250" key="1"/>
<evidence type="ECO:0000250" key="2">
    <source>
        <dbReference type="UniProtKB" id="P31723"/>
    </source>
</evidence>
<evidence type="ECO:0000250" key="3">
    <source>
        <dbReference type="UniProtKB" id="P32906"/>
    </source>
</evidence>
<evidence type="ECO:0000250" key="4">
    <source>
        <dbReference type="UniProtKB" id="P45700"/>
    </source>
</evidence>
<evidence type="ECO:0000255" key="5"/>
<evidence type="ECO:0000305" key="6"/>
<name>MA1A1_RABIT</name>
<organism>
    <name type="scientific">Oryctolagus cuniculus</name>
    <name type="common">Rabbit</name>
    <dbReference type="NCBI Taxonomy" id="9986"/>
    <lineage>
        <taxon>Eukaryota</taxon>
        <taxon>Metazoa</taxon>
        <taxon>Chordata</taxon>
        <taxon>Craniata</taxon>
        <taxon>Vertebrata</taxon>
        <taxon>Euteleostomi</taxon>
        <taxon>Mammalia</taxon>
        <taxon>Eutheria</taxon>
        <taxon>Euarchontoglires</taxon>
        <taxon>Glires</taxon>
        <taxon>Lagomorpha</taxon>
        <taxon>Leporidae</taxon>
        <taxon>Oryctolagus</taxon>
    </lineage>
</organism>
<reference key="1">
    <citation type="journal article" date="1994" name="J. Biol. Chem.">
        <title>Isolation and expression of murine and rabbit cDNAs encoding an alpha 1,2-mannosidase involved in the processing of asparagine-linked oligosaccharides.</title>
        <authorList>
            <person name="Lal A."/>
            <person name="Schutzbach J.S."/>
            <person name="Forsee W.T."/>
            <person name="Neame P.J."/>
            <person name="Moremen K.W."/>
        </authorList>
    </citation>
    <scope>NUCLEOTIDE SEQUENCE [MRNA]</scope>
    <scope>PARTIAL PROTEIN SEQUENCE</scope>
    <source>
        <tissue>Liver</tissue>
    </source>
</reference>
<keyword id="KW-0106">Calcium</keyword>
<keyword id="KW-0903">Direct protein sequencing</keyword>
<keyword id="KW-1015">Disulfide bond</keyword>
<keyword id="KW-0325">Glycoprotein</keyword>
<keyword id="KW-0326">Glycosidase</keyword>
<keyword id="KW-0333">Golgi apparatus</keyword>
<keyword id="KW-0378">Hydrolase</keyword>
<keyword id="KW-0472">Membrane</keyword>
<keyword id="KW-0479">Metal-binding</keyword>
<keyword id="KW-1185">Reference proteome</keyword>
<keyword id="KW-0735">Signal-anchor</keyword>
<keyword id="KW-0812">Transmembrane</keyword>
<proteinExistence type="evidence at protein level"/>
<protein>
    <recommendedName>
        <fullName>Mannosyl-oligosaccharide 1,2-alpha-mannosidase IA</fullName>
        <ecNumber evidence="3">3.2.1.113</ecNumber>
    </recommendedName>
    <alternativeName>
        <fullName>Man(9)-alpha-mannosidase</fullName>
    </alternativeName>
    <alternativeName>
        <fullName>Mannosidase alpha class 1A member 1</fullName>
    </alternativeName>
    <alternativeName>
        <fullName>Processing alpha-1,2-mannosidase IA</fullName>
        <shortName>Alpha-1,2-mannosidase IA</shortName>
    </alternativeName>
</protein>
<dbReference type="EC" id="3.2.1.113" evidence="3"/>
<dbReference type="EMBL" id="U04301">
    <property type="protein sequence ID" value="AAA17748.1"/>
    <property type="molecule type" value="mRNA"/>
</dbReference>
<dbReference type="SMR" id="P45701"/>
<dbReference type="FunCoup" id="P45701">
    <property type="interactions" value="2198"/>
</dbReference>
<dbReference type="CAZy" id="GH47">
    <property type="family name" value="Glycoside Hydrolase Family 47"/>
</dbReference>
<dbReference type="GlyCosmos" id="P45701">
    <property type="glycosylation" value="1 site, No reported glycans"/>
</dbReference>
<dbReference type="PaxDb" id="9986-ENSOCUP00000005793"/>
<dbReference type="eggNOG" id="KOG2204">
    <property type="taxonomic scope" value="Eukaryota"/>
</dbReference>
<dbReference type="InParanoid" id="P45701"/>
<dbReference type="UniPathway" id="UPA00378"/>
<dbReference type="Proteomes" id="UP000001811">
    <property type="component" value="Unplaced"/>
</dbReference>
<dbReference type="GO" id="GO:0005783">
    <property type="term" value="C:endoplasmic reticulum"/>
    <property type="evidence" value="ECO:0007669"/>
    <property type="project" value="TreeGrafter"/>
</dbReference>
<dbReference type="GO" id="GO:0070062">
    <property type="term" value="C:extracellular exosome"/>
    <property type="evidence" value="ECO:0007669"/>
    <property type="project" value="TreeGrafter"/>
</dbReference>
<dbReference type="GO" id="GO:0000139">
    <property type="term" value="C:Golgi membrane"/>
    <property type="evidence" value="ECO:0007669"/>
    <property type="project" value="UniProtKB-SubCell"/>
</dbReference>
<dbReference type="GO" id="GO:0005509">
    <property type="term" value="F:calcium ion binding"/>
    <property type="evidence" value="ECO:0007669"/>
    <property type="project" value="InterPro"/>
</dbReference>
<dbReference type="GO" id="GO:0004571">
    <property type="term" value="F:mannosyl-oligosaccharide 1,2-alpha-mannosidase activity"/>
    <property type="evidence" value="ECO:0007669"/>
    <property type="project" value="UniProtKB-EC"/>
</dbReference>
<dbReference type="GO" id="GO:0005975">
    <property type="term" value="P:carbohydrate metabolic process"/>
    <property type="evidence" value="ECO:0007669"/>
    <property type="project" value="InterPro"/>
</dbReference>
<dbReference type="GO" id="GO:0006486">
    <property type="term" value="P:protein glycosylation"/>
    <property type="evidence" value="ECO:0007669"/>
    <property type="project" value="UniProtKB-UniPathway"/>
</dbReference>
<dbReference type="FunFam" id="1.50.10.10:FF:000002">
    <property type="entry name" value="alpha-1,2-Mannosidase"/>
    <property type="match status" value="1"/>
</dbReference>
<dbReference type="Gene3D" id="1.50.10.10">
    <property type="match status" value="1"/>
</dbReference>
<dbReference type="InterPro" id="IPR012341">
    <property type="entry name" value="6hp_glycosidase-like_sf"/>
</dbReference>
<dbReference type="InterPro" id="IPR001382">
    <property type="entry name" value="Glyco_hydro_47"/>
</dbReference>
<dbReference type="InterPro" id="IPR050749">
    <property type="entry name" value="Glycosyl_Hydrolase_47"/>
</dbReference>
<dbReference type="InterPro" id="IPR036026">
    <property type="entry name" value="Seven-hairpin_glycosidases"/>
</dbReference>
<dbReference type="PANTHER" id="PTHR11742:SF31">
    <property type="entry name" value="MANNOSYL-OLIGOSACCHARIDE 1,2-ALPHA-MANNOSIDASE IA"/>
    <property type="match status" value="1"/>
</dbReference>
<dbReference type="PANTHER" id="PTHR11742">
    <property type="entry name" value="MANNOSYL-OLIGOSACCHARIDE ALPHA-1,2-MANNOSIDASE-RELATED"/>
    <property type="match status" value="1"/>
</dbReference>
<dbReference type="Pfam" id="PF01532">
    <property type="entry name" value="Glyco_hydro_47"/>
    <property type="match status" value="1"/>
</dbReference>
<dbReference type="PRINTS" id="PR00747">
    <property type="entry name" value="GLYHDRLASE47"/>
</dbReference>
<dbReference type="SUPFAM" id="SSF48225">
    <property type="entry name" value="Seven-hairpin glycosidases"/>
    <property type="match status" value="1"/>
</dbReference>